<gene>
    <name evidence="1" type="primary">folE</name>
    <name type="ordered locus">EcolC_1495</name>
</gene>
<sequence>MPSLSKEAALVHEALVARGLETPLRPPVHEMDNETRKSLIAGHMTEIMQLLNLDLADDSLMETPHRIAKMYVDEIFSGLDYANFPKITLIENKMKVDEMVTVRDITLTSTCEHHFVTIDGKATVAYIPKDSVIGLSKINRIVQFFAQRPQVQERLTQQILIALQTLLGTNNVAVSIDAVHYCVKARGIRDATSATTTTSLGGLFKSSQNTRHEFLRAVRHHN</sequence>
<protein>
    <recommendedName>
        <fullName evidence="1">GTP cyclohydrolase 1</fullName>
        <ecNumber evidence="1">3.5.4.16</ecNumber>
    </recommendedName>
    <alternativeName>
        <fullName evidence="1">GTP cyclohydrolase I</fullName>
        <shortName evidence="1">GTP-CH-I</shortName>
    </alternativeName>
</protein>
<organism>
    <name type="scientific">Escherichia coli (strain ATCC 8739 / DSM 1576 / NBRC 3972 / NCIMB 8545 / WDCM 00012 / Crooks)</name>
    <dbReference type="NCBI Taxonomy" id="481805"/>
    <lineage>
        <taxon>Bacteria</taxon>
        <taxon>Pseudomonadati</taxon>
        <taxon>Pseudomonadota</taxon>
        <taxon>Gammaproteobacteria</taxon>
        <taxon>Enterobacterales</taxon>
        <taxon>Enterobacteriaceae</taxon>
        <taxon>Escherichia</taxon>
    </lineage>
</organism>
<keyword id="KW-0342">GTP-binding</keyword>
<keyword id="KW-0378">Hydrolase</keyword>
<keyword id="KW-0479">Metal-binding</keyword>
<keyword id="KW-0547">Nucleotide-binding</keyword>
<keyword id="KW-0554">One-carbon metabolism</keyword>
<keyword id="KW-0862">Zinc</keyword>
<reference key="1">
    <citation type="submission" date="2008-02" db="EMBL/GenBank/DDBJ databases">
        <title>Complete sequence of Escherichia coli C str. ATCC 8739.</title>
        <authorList>
            <person name="Copeland A."/>
            <person name="Lucas S."/>
            <person name="Lapidus A."/>
            <person name="Glavina del Rio T."/>
            <person name="Dalin E."/>
            <person name="Tice H."/>
            <person name="Bruce D."/>
            <person name="Goodwin L."/>
            <person name="Pitluck S."/>
            <person name="Kiss H."/>
            <person name="Brettin T."/>
            <person name="Detter J.C."/>
            <person name="Han C."/>
            <person name="Kuske C.R."/>
            <person name="Schmutz J."/>
            <person name="Larimer F."/>
            <person name="Land M."/>
            <person name="Hauser L."/>
            <person name="Kyrpides N."/>
            <person name="Mikhailova N."/>
            <person name="Ingram L."/>
            <person name="Richardson P."/>
        </authorList>
    </citation>
    <scope>NUCLEOTIDE SEQUENCE [LARGE SCALE GENOMIC DNA]</scope>
    <source>
        <strain>ATCC 8739 / DSM 1576 / NBRC 3972 / NCIMB 8545 / WDCM 00012 / Crooks</strain>
    </source>
</reference>
<feature type="chain" id="PRO_1000078141" description="GTP cyclohydrolase 1">
    <location>
        <begin position="1"/>
        <end position="222"/>
    </location>
</feature>
<feature type="binding site" evidence="1">
    <location>
        <position position="111"/>
    </location>
    <ligand>
        <name>Zn(2+)</name>
        <dbReference type="ChEBI" id="CHEBI:29105"/>
    </ligand>
</feature>
<feature type="binding site" evidence="1">
    <location>
        <position position="114"/>
    </location>
    <ligand>
        <name>Zn(2+)</name>
        <dbReference type="ChEBI" id="CHEBI:29105"/>
    </ligand>
</feature>
<feature type="binding site" evidence="1">
    <location>
        <position position="182"/>
    </location>
    <ligand>
        <name>Zn(2+)</name>
        <dbReference type="ChEBI" id="CHEBI:29105"/>
    </ligand>
</feature>
<accession>B1IYB6</accession>
<proteinExistence type="inferred from homology"/>
<name>GCH1_ECOLC</name>
<dbReference type="EC" id="3.5.4.16" evidence="1"/>
<dbReference type="EMBL" id="CP000946">
    <property type="protein sequence ID" value="ACA77157.1"/>
    <property type="molecule type" value="Genomic_DNA"/>
</dbReference>
<dbReference type="RefSeq" id="WP_001139613.1">
    <property type="nucleotide sequence ID" value="NZ_MTFT01000031.1"/>
</dbReference>
<dbReference type="SMR" id="B1IYB6"/>
<dbReference type="GeneID" id="93775029"/>
<dbReference type="KEGG" id="ecl:EcolC_1495"/>
<dbReference type="HOGENOM" id="CLU_049768_3_2_6"/>
<dbReference type="UniPathway" id="UPA00848">
    <property type="reaction ID" value="UER00151"/>
</dbReference>
<dbReference type="GO" id="GO:0005737">
    <property type="term" value="C:cytoplasm"/>
    <property type="evidence" value="ECO:0007669"/>
    <property type="project" value="TreeGrafter"/>
</dbReference>
<dbReference type="GO" id="GO:0005525">
    <property type="term" value="F:GTP binding"/>
    <property type="evidence" value="ECO:0007669"/>
    <property type="project" value="UniProtKB-KW"/>
</dbReference>
<dbReference type="GO" id="GO:0003934">
    <property type="term" value="F:GTP cyclohydrolase I activity"/>
    <property type="evidence" value="ECO:0007669"/>
    <property type="project" value="UniProtKB-UniRule"/>
</dbReference>
<dbReference type="GO" id="GO:0008270">
    <property type="term" value="F:zinc ion binding"/>
    <property type="evidence" value="ECO:0007669"/>
    <property type="project" value="UniProtKB-UniRule"/>
</dbReference>
<dbReference type="GO" id="GO:0006730">
    <property type="term" value="P:one-carbon metabolic process"/>
    <property type="evidence" value="ECO:0007669"/>
    <property type="project" value="UniProtKB-UniRule"/>
</dbReference>
<dbReference type="GO" id="GO:0006729">
    <property type="term" value="P:tetrahydrobiopterin biosynthetic process"/>
    <property type="evidence" value="ECO:0007669"/>
    <property type="project" value="TreeGrafter"/>
</dbReference>
<dbReference type="GO" id="GO:0046654">
    <property type="term" value="P:tetrahydrofolate biosynthetic process"/>
    <property type="evidence" value="ECO:0007669"/>
    <property type="project" value="UniProtKB-UniRule"/>
</dbReference>
<dbReference type="CDD" id="cd00642">
    <property type="entry name" value="GTP_cyclohydro1"/>
    <property type="match status" value="1"/>
</dbReference>
<dbReference type="FunFam" id="1.10.286.10:FF:000002">
    <property type="entry name" value="GTP cyclohydrolase 1"/>
    <property type="match status" value="1"/>
</dbReference>
<dbReference type="FunFam" id="3.30.1130.10:FF:000001">
    <property type="entry name" value="GTP cyclohydrolase 1"/>
    <property type="match status" value="1"/>
</dbReference>
<dbReference type="Gene3D" id="1.10.286.10">
    <property type="match status" value="1"/>
</dbReference>
<dbReference type="Gene3D" id="3.30.1130.10">
    <property type="match status" value="1"/>
</dbReference>
<dbReference type="HAMAP" id="MF_00223">
    <property type="entry name" value="FolE"/>
    <property type="match status" value="1"/>
</dbReference>
<dbReference type="InterPro" id="IPR043133">
    <property type="entry name" value="GTP-CH-I_C/QueF"/>
</dbReference>
<dbReference type="InterPro" id="IPR043134">
    <property type="entry name" value="GTP-CH-I_N"/>
</dbReference>
<dbReference type="InterPro" id="IPR001474">
    <property type="entry name" value="GTP_CycHdrlase_I"/>
</dbReference>
<dbReference type="InterPro" id="IPR018234">
    <property type="entry name" value="GTP_CycHdrlase_I_CS"/>
</dbReference>
<dbReference type="InterPro" id="IPR020602">
    <property type="entry name" value="GTP_CycHdrlase_I_dom"/>
</dbReference>
<dbReference type="NCBIfam" id="TIGR00063">
    <property type="entry name" value="folE"/>
    <property type="match status" value="1"/>
</dbReference>
<dbReference type="NCBIfam" id="NF006824">
    <property type="entry name" value="PRK09347.1-1"/>
    <property type="match status" value="1"/>
</dbReference>
<dbReference type="NCBIfam" id="NF006826">
    <property type="entry name" value="PRK09347.1-3"/>
    <property type="match status" value="1"/>
</dbReference>
<dbReference type="PANTHER" id="PTHR11109:SF7">
    <property type="entry name" value="GTP CYCLOHYDROLASE 1"/>
    <property type="match status" value="1"/>
</dbReference>
<dbReference type="PANTHER" id="PTHR11109">
    <property type="entry name" value="GTP CYCLOHYDROLASE I"/>
    <property type="match status" value="1"/>
</dbReference>
<dbReference type="Pfam" id="PF01227">
    <property type="entry name" value="GTP_cyclohydroI"/>
    <property type="match status" value="1"/>
</dbReference>
<dbReference type="SUPFAM" id="SSF55620">
    <property type="entry name" value="Tetrahydrobiopterin biosynthesis enzymes-like"/>
    <property type="match status" value="1"/>
</dbReference>
<dbReference type="PROSITE" id="PS00859">
    <property type="entry name" value="GTP_CYCLOHYDROL_1_1"/>
    <property type="match status" value="1"/>
</dbReference>
<dbReference type="PROSITE" id="PS00860">
    <property type="entry name" value="GTP_CYCLOHYDROL_1_2"/>
    <property type="match status" value="1"/>
</dbReference>
<comment type="catalytic activity">
    <reaction evidence="1">
        <text>GTP + H2O = 7,8-dihydroneopterin 3'-triphosphate + formate + H(+)</text>
        <dbReference type="Rhea" id="RHEA:17473"/>
        <dbReference type="ChEBI" id="CHEBI:15377"/>
        <dbReference type="ChEBI" id="CHEBI:15378"/>
        <dbReference type="ChEBI" id="CHEBI:15740"/>
        <dbReference type="ChEBI" id="CHEBI:37565"/>
        <dbReference type="ChEBI" id="CHEBI:58462"/>
        <dbReference type="EC" id="3.5.4.16"/>
    </reaction>
</comment>
<comment type="pathway">
    <text evidence="1">Cofactor biosynthesis; 7,8-dihydroneopterin triphosphate biosynthesis; 7,8-dihydroneopterin triphosphate from GTP: step 1/1.</text>
</comment>
<comment type="subunit">
    <text evidence="1">Homomer.</text>
</comment>
<comment type="similarity">
    <text evidence="1">Belongs to the GTP cyclohydrolase I family.</text>
</comment>
<evidence type="ECO:0000255" key="1">
    <source>
        <dbReference type="HAMAP-Rule" id="MF_00223"/>
    </source>
</evidence>